<reference key="1">
    <citation type="journal article" date="2004" name="Nat. Biotechnol.">
        <title>The genome sequence of the capnophilic rumen bacterium Mannheimia succiniciproducens.</title>
        <authorList>
            <person name="Hong S.H."/>
            <person name="Kim J.S."/>
            <person name="Lee S.Y."/>
            <person name="In Y.H."/>
            <person name="Choi S.S."/>
            <person name="Rih J.-K."/>
            <person name="Kim C.H."/>
            <person name="Jeong H."/>
            <person name="Hur C.G."/>
            <person name="Kim J.J."/>
        </authorList>
    </citation>
    <scope>NUCLEOTIDE SEQUENCE [LARGE SCALE GENOMIC DNA]</scope>
    <source>
        <strain>KCTC 0769BP / MBEL55E</strain>
    </source>
</reference>
<keyword id="KW-0963">Cytoplasm</keyword>
<keyword id="KW-0570">Pentose shunt</keyword>
<keyword id="KW-0704">Schiff base</keyword>
<keyword id="KW-0808">Transferase</keyword>
<name>TAL_MANSM</name>
<gene>
    <name evidence="2" type="primary">tal</name>
    <name type="ordered locus">MS2355</name>
</gene>
<evidence type="ECO:0000250" key="1"/>
<evidence type="ECO:0000255" key="2">
    <source>
        <dbReference type="HAMAP-Rule" id="MF_00492"/>
    </source>
</evidence>
<accession>Q65PZ8</accession>
<dbReference type="EC" id="2.2.1.2" evidence="2"/>
<dbReference type="EMBL" id="AE016827">
    <property type="protein sequence ID" value="AAU38962.1"/>
    <property type="molecule type" value="Genomic_DNA"/>
</dbReference>
<dbReference type="RefSeq" id="WP_011201500.1">
    <property type="nucleotide sequence ID" value="NC_006300.1"/>
</dbReference>
<dbReference type="SMR" id="Q65PZ8"/>
<dbReference type="STRING" id="221988.MS2355"/>
<dbReference type="KEGG" id="msu:MS2355"/>
<dbReference type="eggNOG" id="COG0176">
    <property type="taxonomic scope" value="Bacteria"/>
</dbReference>
<dbReference type="HOGENOM" id="CLU_047470_0_1_6"/>
<dbReference type="OrthoDB" id="9809101at2"/>
<dbReference type="UniPathway" id="UPA00115">
    <property type="reaction ID" value="UER00414"/>
</dbReference>
<dbReference type="Proteomes" id="UP000000607">
    <property type="component" value="Chromosome"/>
</dbReference>
<dbReference type="GO" id="GO:0005829">
    <property type="term" value="C:cytosol"/>
    <property type="evidence" value="ECO:0007669"/>
    <property type="project" value="TreeGrafter"/>
</dbReference>
<dbReference type="GO" id="GO:0004801">
    <property type="term" value="F:transaldolase activity"/>
    <property type="evidence" value="ECO:0000250"/>
    <property type="project" value="UniProtKB"/>
</dbReference>
<dbReference type="GO" id="GO:0005975">
    <property type="term" value="P:carbohydrate metabolic process"/>
    <property type="evidence" value="ECO:0007669"/>
    <property type="project" value="InterPro"/>
</dbReference>
<dbReference type="GO" id="GO:0006098">
    <property type="term" value="P:pentose-phosphate shunt"/>
    <property type="evidence" value="ECO:0007669"/>
    <property type="project" value="UniProtKB-UniRule"/>
</dbReference>
<dbReference type="CDD" id="cd00957">
    <property type="entry name" value="Transaldolase_TalAB"/>
    <property type="match status" value="1"/>
</dbReference>
<dbReference type="FunFam" id="3.20.20.70:FF:000002">
    <property type="entry name" value="Transaldolase"/>
    <property type="match status" value="1"/>
</dbReference>
<dbReference type="Gene3D" id="3.20.20.70">
    <property type="entry name" value="Aldolase class I"/>
    <property type="match status" value="1"/>
</dbReference>
<dbReference type="HAMAP" id="MF_00492">
    <property type="entry name" value="Transaldolase_1"/>
    <property type="match status" value="1"/>
</dbReference>
<dbReference type="InterPro" id="IPR013785">
    <property type="entry name" value="Aldolase_TIM"/>
</dbReference>
<dbReference type="InterPro" id="IPR001585">
    <property type="entry name" value="TAL/FSA"/>
</dbReference>
<dbReference type="InterPro" id="IPR004730">
    <property type="entry name" value="Transaldolase_1"/>
</dbReference>
<dbReference type="InterPro" id="IPR018225">
    <property type="entry name" value="Transaldolase_AS"/>
</dbReference>
<dbReference type="NCBIfam" id="NF009001">
    <property type="entry name" value="PRK12346.1"/>
    <property type="match status" value="1"/>
</dbReference>
<dbReference type="NCBIfam" id="TIGR00874">
    <property type="entry name" value="talAB"/>
    <property type="match status" value="1"/>
</dbReference>
<dbReference type="PANTHER" id="PTHR10683">
    <property type="entry name" value="TRANSALDOLASE"/>
    <property type="match status" value="1"/>
</dbReference>
<dbReference type="PANTHER" id="PTHR10683:SF18">
    <property type="entry name" value="TRANSALDOLASE"/>
    <property type="match status" value="1"/>
</dbReference>
<dbReference type="Pfam" id="PF00923">
    <property type="entry name" value="TAL_FSA"/>
    <property type="match status" value="1"/>
</dbReference>
<dbReference type="SUPFAM" id="SSF51569">
    <property type="entry name" value="Aldolase"/>
    <property type="match status" value="1"/>
</dbReference>
<dbReference type="PROSITE" id="PS01054">
    <property type="entry name" value="TRANSALDOLASE_1"/>
    <property type="match status" value="1"/>
</dbReference>
<dbReference type="PROSITE" id="PS00958">
    <property type="entry name" value="TRANSALDOLASE_2"/>
    <property type="match status" value="1"/>
</dbReference>
<feature type="chain" id="PRO_0000230955" description="Transaldolase">
    <location>
        <begin position="1"/>
        <end position="317"/>
    </location>
</feature>
<feature type="active site" description="Schiff-base intermediate with substrate" evidence="2">
    <location>
        <position position="132"/>
    </location>
</feature>
<protein>
    <recommendedName>
        <fullName evidence="2">Transaldolase</fullName>
        <ecNumber evidence="2">2.2.1.2</ecNumber>
    </recommendedName>
</protein>
<sequence>MTTQLDALRNMTVVVADTGDIEAIKKYQPQDATTNPSLILSASALPQYASLIDDAINYAKAKSTDKAQQLIDAEDKLAVNIGLEILKIVPGRISTEVDARLSYDTAATVEKARKLIKLYNEAGINNDRILIKVASTWQGIRAAEILEKEGINCNLTLLFSQAQARACAEAGVYLISPFVGRILDWYKANTDKKEYVPNEDPGVISVTSIYNYYKQYGYQTVVMGASFRNIGEITELAGCDRLTIAPALLKELQESNADLPRKLDYKGEVKPKPAPLTESQFYWEHNNDPMAVDKLAEGIRKFAADIEKLEAMLSTKL</sequence>
<proteinExistence type="inferred from homology"/>
<organism>
    <name type="scientific">Mannheimia succiniciproducens (strain KCTC 0769BP / MBEL55E)</name>
    <dbReference type="NCBI Taxonomy" id="221988"/>
    <lineage>
        <taxon>Bacteria</taxon>
        <taxon>Pseudomonadati</taxon>
        <taxon>Pseudomonadota</taxon>
        <taxon>Gammaproteobacteria</taxon>
        <taxon>Pasteurellales</taxon>
        <taxon>Pasteurellaceae</taxon>
        <taxon>Basfia</taxon>
    </lineage>
</organism>
<comment type="function">
    <text evidence="2">Transaldolase is important for the balance of metabolites in the pentose-phosphate pathway.</text>
</comment>
<comment type="catalytic activity">
    <reaction evidence="2">
        <text>D-sedoheptulose 7-phosphate + D-glyceraldehyde 3-phosphate = D-erythrose 4-phosphate + beta-D-fructose 6-phosphate</text>
        <dbReference type="Rhea" id="RHEA:17053"/>
        <dbReference type="ChEBI" id="CHEBI:16897"/>
        <dbReference type="ChEBI" id="CHEBI:57483"/>
        <dbReference type="ChEBI" id="CHEBI:57634"/>
        <dbReference type="ChEBI" id="CHEBI:59776"/>
        <dbReference type="EC" id="2.2.1.2"/>
    </reaction>
</comment>
<comment type="pathway">
    <text evidence="2">Carbohydrate degradation; pentose phosphate pathway; D-glyceraldehyde 3-phosphate and beta-D-fructose 6-phosphate from D-ribose 5-phosphate and D-xylulose 5-phosphate (non-oxidative stage): step 2/3.</text>
</comment>
<comment type="subunit">
    <text evidence="1">Homodimer.</text>
</comment>
<comment type="subcellular location">
    <subcellularLocation>
        <location evidence="2">Cytoplasm</location>
    </subcellularLocation>
</comment>
<comment type="similarity">
    <text evidence="2">Belongs to the transaldolase family. Type 1 subfamily.</text>
</comment>